<sequence length="491" mass="54069">MANYFNTLNLRQQLAQLGKCRFMGRDEFADGASYLQGKKVVIVGCGAQGLNQGLNMRDSGLDISYALRKEAIAEKRASWRKATENGFKVGTYEELIPQADLVVNLTPDKQHSDVVRTVQPLMKDGAALGYSHGFNIVEVGEQIRKDITVVMVAPKCPGTEVREEYKRGFGVPTLIAVHPENDPKGEGMAIAKAWAAATGGHRAGVLESSFVAEVKSDLMGEQTILCGMLQAGSLLCFDKLVEEGTDPAYAEKLIQFGWETITEALKQGGITLMMDRLSNPAKLRAYALSEQLKEIMAPLFQKHMDDIISGEFSSGMMADWANDDKKLLTWREETGKTAFETAPQYEGKIGEQEYFDKGVLMIAMVKAGVELAFETMVDSGIIEESAYYESLHELPLIANTIARKRLYEMNVVISDTAEYGNYLFSYACVPLLKPFMAELQPGDLGKAIPEGAVDNAQLRDVNEAIRSHAIEQVGKKLRGYMTDMKRIAVAG</sequence>
<keyword id="KW-0028">Amino-acid biosynthesis</keyword>
<keyword id="KW-0100">Branched-chain amino acid biosynthesis</keyword>
<keyword id="KW-0460">Magnesium</keyword>
<keyword id="KW-0479">Metal-binding</keyword>
<keyword id="KW-0521">NADP</keyword>
<keyword id="KW-0560">Oxidoreductase</keyword>
<keyword id="KW-0677">Repeat</keyword>
<feature type="chain" id="PRO_1000190963" description="Ketol-acid reductoisomerase (NADP(+))">
    <location>
        <begin position="1"/>
        <end position="491"/>
    </location>
</feature>
<feature type="domain" description="KARI N-terminal Rossmann" evidence="2">
    <location>
        <begin position="15"/>
        <end position="208"/>
    </location>
</feature>
<feature type="domain" description="KARI C-terminal knotted 1" evidence="3">
    <location>
        <begin position="209"/>
        <end position="344"/>
    </location>
</feature>
<feature type="domain" description="KARI C-terminal knotted 2" evidence="3">
    <location>
        <begin position="345"/>
        <end position="484"/>
    </location>
</feature>
<feature type="active site" evidence="1">
    <location>
        <position position="132"/>
    </location>
</feature>
<feature type="binding site" evidence="1">
    <location>
        <begin position="45"/>
        <end position="48"/>
    </location>
    <ligand>
        <name>NADP(+)</name>
        <dbReference type="ChEBI" id="CHEBI:58349"/>
    </ligand>
</feature>
<feature type="binding site" evidence="1">
    <location>
        <position position="68"/>
    </location>
    <ligand>
        <name>NADP(+)</name>
        <dbReference type="ChEBI" id="CHEBI:58349"/>
    </ligand>
</feature>
<feature type="binding site" evidence="1">
    <location>
        <position position="76"/>
    </location>
    <ligand>
        <name>NADP(+)</name>
        <dbReference type="ChEBI" id="CHEBI:58349"/>
    </ligand>
</feature>
<feature type="binding site" evidence="1">
    <location>
        <position position="78"/>
    </location>
    <ligand>
        <name>NADP(+)</name>
        <dbReference type="ChEBI" id="CHEBI:58349"/>
    </ligand>
</feature>
<feature type="binding site" evidence="1">
    <location>
        <begin position="108"/>
        <end position="110"/>
    </location>
    <ligand>
        <name>NADP(+)</name>
        <dbReference type="ChEBI" id="CHEBI:58349"/>
    </ligand>
</feature>
<feature type="binding site" evidence="1">
    <location>
        <position position="158"/>
    </location>
    <ligand>
        <name>NADP(+)</name>
        <dbReference type="ChEBI" id="CHEBI:58349"/>
    </ligand>
</feature>
<feature type="binding site" evidence="1">
    <location>
        <position position="217"/>
    </location>
    <ligand>
        <name>Mg(2+)</name>
        <dbReference type="ChEBI" id="CHEBI:18420"/>
        <label>1</label>
    </ligand>
</feature>
<feature type="binding site" evidence="1">
    <location>
        <position position="217"/>
    </location>
    <ligand>
        <name>Mg(2+)</name>
        <dbReference type="ChEBI" id="CHEBI:18420"/>
        <label>2</label>
    </ligand>
</feature>
<feature type="binding site" evidence="1">
    <location>
        <position position="221"/>
    </location>
    <ligand>
        <name>Mg(2+)</name>
        <dbReference type="ChEBI" id="CHEBI:18420"/>
        <label>1</label>
    </ligand>
</feature>
<feature type="binding site" evidence="1">
    <location>
        <position position="389"/>
    </location>
    <ligand>
        <name>Mg(2+)</name>
        <dbReference type="ChEBI" id="CHEBI:18420"/>
        <label>2</label>
    </ligand>
</feature>
<feature type="binding site" evidence="1">
    <location>
        <position position="393"/>
    </location>
    <ligand>
        <name>Mg(2+)</name>
        <dbReference type="ChEBI" id="CHEBI:18420"/>
        <label>2</label>
    </ligand>
</feature>
<feature type="binding site" evidence="1">
    <location>
        <position position="414"/>
    </location>
    <ligand>
        <name>substrate</name>
    </ligand>
</feature>
<comment type="function">
    <text evidence="1">Involved in the biosynthesis of branched-chain amino acids (BCAA). Catalyzes an alkyl-migration followed by a ketol-acid reduction of (S)-2-acetolactate (S2AL) to yield (R)-2,3-dihydroxy-isovalerate. In the isomerase reaction, S2AL is rearranged via a Mg-dependent methyl migration to produce 3-hydroxy-3-methyl-2-ketobutyrate (HMKB). In the reductase reaction, this 2-ketoacid undergoes a metal-dependent reduction by NADPH to yield (R)-2,3-dihydroxy-isovalerate.</text>
</comment>
<comment type="catalytic activity">
    <reaction evidence="1">
        <text>(2R)-2,3-dihydroxy-3-methylbutanoate + NADP(+) = (2S)-2-acetolactate + NADPH + H(+)</text>
        <dbReference type="Rhea" id="RHEA:22068"/>
        <dbReference type="ChEBI" id="CHEBI:15378"/>
        <dbReference type="ChEBI" id="CHEBI:49072"/>
        <dbReference type="ChEBI" id="CHEBI:57783"/>
        <dbReference type="ChEBI" id="CHEBI:58349"/>
        <dbReference type="ChEBI" id="CHEBI:58476"/>
        <dbReference type="EC" id="1.1.1.86"/>
    </reaction>
</comment>
<comment type="catalytic activity">
    <reaction evidence="1">
        <text>(2R,3R)-2,3-dihydroxy-3-methylpentanoate + NADP(+) = (S)-2-ethyl-2-hydroxy-3-oxobutanoate + NADPH + H(+)</text>
        <dbReference type="Rhea" id="RHEA:13493"/>
        <dbReference type="ChEBI" id="CHEBI:15378"/>
        <dbReference type="ChEBI" id="CHEBI:49256"/>
        <dbReference type="ChEBI" id="CHEBI:49258"/>
        <dbReference type="ChEBI" id="CHEBI:57783"/>
        <dbReference type="ChEBI" id="CHEBI:58349"/>
        <dbReference type="EC" id="1.1.1.86"/>
    </reaction>
</comment>
<comment type="cofactor">
    <cofactor evidence="1">
        <name>Mg(2+)</name>
        <dbReference type="ChEBI" id="CHEBI:18420"/>
    </cofactor>
    <text evidence="1">Binds 2 magnesium ions per subunit.</text>
</comment>
<comment type="pathway">
    <text evidence="1">Amino-acid biosynthesis; L-isoleucine biosynthesis; L-isoleucine from 2-oxobutanoate: step 2/4.</text>
</comment>
<comment type="pathway">
    <text evidence="1">Amino-acid biosynthesis; L-valine biosynthesis; L-valine from pyruvate: step 2/4.</text>
</comment>
<comment type="similarity">
    <text evidence="1">Belongs to the ketol-acid reductoisomerase family.</text>
</comment>
<gene>
    <name evidence="1" type="primary">ilvC</name>
    <name type="ordered locus">ECED1_4460</name>
</gene>
<reference key="1">
    <citation type="journal article" date="2009" name="PLoS Genet.">
        <title>Organised genome dynamics in the Escherichia coli species results in highly diverse adaptive paths.</title>
        <authorList>
            <person name="Touchon M."/>
            <person name="Hoede C."/>
            <person name="Tenaillon O."/>
            <person name="Barbe V."/>
            <person name="Baeriswyl S."/>
            <person name="Bidet P."/>
            <person name="Bingen E."/>
            <person name="Bonacorsi S."/>
            <person name="Bouchier C."/>
            <person name="Bouvet O."/>
            <person name="Calteau A."/>
            <person name="Chiapello H."/>
            <person name="Clermont O."/>
            <person name="Cruveiller S."/>
            <person name="Danchin A."/>
            <person name="Diard M."/>
            <person name="Dossat C."/>
            <person name="Karoui M.E."/>
            <person name="Frapy E."/>
            <person name="Garry L."/>
            <person name="Ghigo J.M."/>
            <person name="Gilles A.M."/>
            <person name="Johnson J."/>
            <person name="Le Bouguenec C."/>
            <person name="Lescat M."/>
            <person name="Mangenot S."/>
            <person name="Martinez-Jehanne V."/>
            <person name="Matic I."/>
            <person name="Nassif X."/>
            <person name="Oztas S."/>
            <person name="Petit M.A."/>
            <person name="Pichon C."/>
            <person name="Rouy Z."/>
            <person name="Ruf C.S."/>
            <person name="Schneider D."/>
            <person name="Tourret J."/>
            <person name="Vacherie B."/>
            <person name="Vallenet D."/>
            <person name="Medigue C."/>
            <person name="Rocha E.P.C."/>
            <person name="Denamur E."/>
        </authorList>
    </citation>
    <scope>NUCLEOTIDE SEQUENCE [LARGE SCALE GENOMIC DNA]</scope>
    <source>
        <strain>ED1a</strain>
    </source>
</reference>
<protein>
    <recommendedName>
        <fullName evidence="1">Ketol-acid reductoisomerase (NADP(+))</fullName>
        <shortName evidence="1">KARI</shortName>
        <ecNumber evidence="1">1.1.1.86</ecNumber>
    </recommendedName>
    <alternativeName>
        <fullName evidence="1">Acetohydroxy-acid isomeroreductase</fullName>
        <shortName evidence="1">AHIR</shortName>
    </alternativeName>
    <alternativeName>
        <fullName evidence="1">Alpha-keto-beta-hydroxylacyl reductoisomerase</fullName>
    </alternativeName>
    <alternativeName>
        <fullName evidence="1">Ketol-acid reductoisomerase type 2</fullName>
    </alternativeName>
    <alternativeName>
        <fullName evidence="1">Ketol-acid reductoisomerase type II</fullName>
    </alternativeName>
</protein>
<organism>
    <name type="scientific">Escherichia coli O81 (strain ED1a)</name>
    <dbReference type="NCBI Taxonomy" id="585397"/>
    <lineage>
        <taxon>Bacteria</taxon>
        <taxon>Pseudomonadati</taxon>
        <taxon>Pseudomonadota</taxon>
        <taxon>Gammaproteobacteria</taxon>
        <taxon>Enterobacterales</taxon>
        <taxon>Enterobacteriaceae</taxon>
        <taxon>Escherichia</taxon>
    </lineage>
</organism>
<proteinExistence type="inferred from homology"/>
<accession>B7N269</accession>
<name>ILVC_ECO81</name>
<evidence type="ECO:0000255" key="1">
    <source>
        <dbReference type="HAMAP-Rule" id="MF_00435"/>
    </source>
</evidence>
<evidence type="ECO:0000255" key="2">
    <source>
        <dbReference type="PROSITE-ProRule" id="PRU01197"/>
    </source>
</evidence>
<evidence type="ECO:0000255" key="3">
    <source>
        <dbReference type="PROSITE-ProRule" id="PRU01198"/>
    </source>
</evidence>
<dbReference type="EC" id="1.1.1.86" evidence="1"/>
<dbReference type="EMBL" id="CU928162">
    <property type="protein sequence ID" value="CAR10440.1"/>
    <property type="molecule type" value="Genomic_DNA"/>
</dbReference>
<dbReference type="RefSeq" id="WP_000024951.1">
    <property type="nucleotide sequence ID" value="NC_011745.1"/>
</dbReference>
<dbReference type="SMR" id="B7N269"/>
<dbReference type="GeneID" id="75204765"/>
<dbReference type="KEGG" id="ecq:ECED1_4460"/>
<dbReference type="HOGENOM" id="CLU_551905_0_0_6"/>
<dbReference type="UniPathway" id="UPA00047">
    <property type="reaction ID" value="UER00056"/>
</dbReference>
<dbReference type="UniPathway" id="UPA00049">
    <property type="reaction ID" value="UER00060"/>
</dbReference>
<dbReference type="Proteomes" id="UP000000748">
    <property type="component" value="Chromosome"/>
</dbReference>
<dbReference type="GO" id="GO:0005829">
    <property type="term" value="C:cytosol"/>
    <property type="evidence" value="ECO:0007669"/>
    <property type="project" value="TreeGrafter"/>
</dbReference>
<dbReference type="GO" id="GO:0004455">
    <property type="term" value="F:ketol-acid reductoisomerase activity"/>
    <property type="evidence" value="ECO:0007669"/>
    <property type="project" value="UniProtKB-UniRule"/>
</dbReference>
<dbReference type="GO" id="GO:0000287">
    <property type="term" value="F:magnesium ion binding"/>
    <property type="evidence" value="ECO:0007669"/>
    <property type="project" value="UniProtKB-UniRule"/>
</dbReference>
<dbReference type="GO" id="GO:0009097">
    <property type="term" value="P:isoleucine biosynthetic process"/>
    <property type="evidence" value="ECO:0007669"/>
    <property type="project" value="UniProtKB-UniRule"/>
</dbReference>
<dbReference type="GO" id="GO:0009099">
    <property type="term" value="P:L-valine biosynthetic process"/>
    <property type="evidence" value="ECO:0007669"/>
    <property type="project" value="UniProtKB-UniRule"/>
</dbReference>
<dbReference type="FunFam" id="1.10.1040.10:FF:000007">
    <property type="entry name" value="Ketol-acid reductoisomerase (NADP(+))"/>
    <property type="match status" value="1"/>
</dbReference>
<dbReference type="FunFam" id="3.40.50.720:FF:000043">
    <property type="entry name" value="Ketol-acid reductoisomerase (NADP(+))"/>
    <property type="match status" value="1"/>
</dbReference>
<dbReference type="Gene3D" id="1.10.1040.10">
    <property type="entry name" value="N-(1-d-carboxylethyl)-l-norvaline Dehydrogenase, domain 2"/>
    <property type="match status" value="1"/>
</dbReference>
<dbReference type="Gene3D" id="3.40.50.720">
    <property type="entry name" value="NAD(P)-binding Rossmann-like Domain"/>
    <property type="match status" value="1"/>
</dbReference>
<dbReference type="HAMAP" id="MF_00435">
    <property type="entry name" value="IlvC"/>
    <property type="match status" value="1"/>
</dbReference>
<dbReference type="InterPro" id="IPR008927">
    <property type="entry name" value="6-PGluconate_DH-like_C_sf"/>
</dbReference>
<dbReference type="InterPro" id="IPR013328">
    <property type="entry name" value="6PGD_dom2"/>
</dbReference>
<dbReference type="InterPro" id="IPR013023">
    <property type="entry name" value="KARI"/>
</dbReference>
<dbReference type="InterPro" id="IPR000506">
    <property type="entry name" value="KARI_C"/>
</dbReference>
<dbReference type="InterPro" id="IPR013116">
    <property type="entry name" value="KARI_N"/>
</dbReference>
<dbReference type="InterPro" id="IPR036291">
    <property type="entry name" value="NAD(P)-bd_dom_sf"/>
</dbReference>
<dbReference type="NCBIfam" id="TIGR00465">
    <property type="entry name" value="ilvC"/>
    <property type="match status" value="1"/>
</dbReference>
<dbReference type="NCBIfam" id="NF003557">
    <property type="entry name" value="PRK05225.1"/>
    <property type="match status" value="1"/>
</dbReference>
<dbReference type="PANTHER" id="PTHR21371">
    <property type="entry name" value="KETOL-ACID REDUCTOISOMERASE, MITOCHONDRIAL"/>
    <property type="match status" value="1"/>
</dbReference>
<dbReference type="PANTHER" id="PTHR21371:SF1">
    <property type="entry name" value="KETOL-ACID REDUCTOISOMERASE, MITOCHONDRIAL"/>
    <property type="match status" value="1"/>
</dbReference>
<dbReference type="Pfam" id="PF01450">
    <property type="entry name" value="KARI_C"/>
    <property type="match status" value="2"/>
</dbReference>
<dbReference type="Pfam" id="PF07991">
    <property type="entry name" value="KARI_N"/>
    <property type="match status" value="1"/>
</dbReference>
<dbReference type="SUPFAM" id="SSF48179">
    <property type="entry name" value="6-phosphogluconate dehydrogenase C-terminal domain-like"/>
    <property type="match status" value="2"/>
</dbReference>
<dbReference type="SUPFAM" id="SSF51735">
    <property type="entry name" value="NAD(P)-binding Rossmann-fold domains"/>
    <property type="match status" value="1"/>
</dbReference>
<dbReference type="PROSITE" id="PS51851">
    <property type="entry name" value="KARI_C"/>
    <property type="match status" value="2"/>
</dbReference>
<dbReference type="PROSITE" id="PS51850">
    <property type="entry name" value="KARI_N"/>
    <property type="match status" value="1"/>
</dbReference>